<keyword id="KW-0963">Cytoplasm</keyword>
<keyword id="KW-0312">Gluconeogenesis</keyword>
<keyword id="KW-0324">Glycolysis</keyword>
<keyword id="KW-0413">Isomerase</keyword>
<organism>
    <name type="scientific">Borrelia garinii subsp. bavariensis (strain ATCC BAA-2496 / DSM 23469 / PBi)</name>
    <name type="common">Borreliella bavariensis</name>
    <dbReference type="NCBI Taxonomy" id="290434"/>
    <lineage>
        <taxon>Bacteria</taxon>
        <taxon>Pseudomonadati</taxon>
        <taxon>Spirochaetota</taxon>
        <taxon>Spirochaetia</taxon>
        <taxon>Spirochaetales</taxon>
        <taxon>Borreliaceae</taxon>
        <taxon>Borreliella</taxon>
    </lineage>
</organism>
<evidence type="ECO:0000255" key="1">
    <source>
        <dbReference type="HAMAP-Rule" id="MF_00147"/>
    </source>
</evidence>
<sequence length="253" mass="27897">MRKTFLAGNWKMHYTSTEASIVAKKIATEVKTLKDDFVIMITPPFTALSKVSECIKGSNILLGAQNMSYMESGARTSEISPSMLLEFGVEYVILGHSECRLYLGETDEIINKKILTGLKHPFKYLILCVGETLNERDSEKTLDVVLNQVKKGLDGVSESDIKRIILAYEPIWAIGTGKTATKEEAEEVHKAIRLEIMKLYSKSVSDNVIIQYGGSVNSSNVKELMNEPDIDGALIGGASLKAESFLSIINNVL</sequence>
<feature type="chain" id="PRO_0000307439" description="Triosephosphate isomerase">
    <location>
        <begin position="1"/>
        <end position="253"/>
    </location>
</feature>
<feature type="active site" description="Electrophile" evidence="1">
    <location>
        <position position="96"/>
    </location>
</feature>
<feature type="active site" description="Proton acceptor" evidence="1">
    <location>
        <position position="169"/>
    </location>
</feature>
<feature type="binding site" evidence="1">
    <location>
        <begin position="9"/>
        <end position="11"/>
    </location>
    <ligand>
        <name>substrate</name>
    </ligand>
</feature>
<feature type="binding site" evidence="1">
    <location>
        <position position="175"/>
    </location>
    <ligand>
        <name>substrate</name>
    </ligand>
</feature>
<feature type="binding site" evidence="1">
    <location>
        <position position="215"/>
    </location>
    <ligand>
        <name>substrate</name>
    </ligand>
</feature>
<feature type="binding site" evidence="1">
    <location>
        <begin position="236"/>
        <end position="237"/>
    </location>
    <ligand>
        <name>substrate</name>
    </ligand>
</feature>
<name>TPIS_BORGP</name>
<proteinExistence type="inferred from homology"/>
<dbReference type="EC" id="5.3.1.1" evidence="1"/>
<dbReference type="EMBL" id="CP000013">
    <property type="protein sequence ID" value="AAU06912.1"/>
    <property type="molecule type" value="Genomic_DNA"/>
</dbReference>
<dbReference type="RefSeq" id="WP_011193407.1">
    <property type="nucleotide sequence ID" value="NZ_CP028872.1"/>
</dbReference>
<dbReference type="SMR" id="Q662V9"/>
<dbReference type="GeneID" id="45160852"/>
<dbReference type="KEGG" id="bga:BG0054"/>
<dbReference type="eggNOG" id="COG0149">
    <property type="taxonomic scope" value="Bacteria"/>
</dbReference>
<dbReference type="HOGENOM" id="CLU_024251_2_3_12"/>
<dbReference type="OrthoDB" id="9809429at2"/>
<dbReference type="UniPathway" id="UPA00109">
    <property type="reaction ID" value="UER00189"/>
</dbReference>
<dbReference type="UniPathway" id="UPA00138"/>
<dbReference type="Proteomes" id="UP000002276">
    <property type="component" value="Chromosome"/>
</dbReference>
<dbReference type="GO" id="GO:0005829">
    <property type="term" value="C:cytosol"/>
    <property type="evidence" value="ECO:0007669"/>
    <property type="project" value="TreeGrafter"/>
</dbReference>
<dbReference type="GO" id="GO:0004807">
    <property type="term" value="F:triose-phosphate isomerase activity"/>
    <property type="evidence" value="ECO:0007669"/>
    <property type="project" value="UniProtKB-UniRule"/>
</dbReference>
<dbReference type="GO" id="GO:0006094">
    <property type="term" value="P:gluconeogenesis"/>
    <property type="evidence" value="ECO:0007669"/>
    <property type="project" value="UniProtKB-UniRule"/>
</dbReference>
<dbReference type="GO" id="GO:0046166">
    <property type="term" value="P:glyceraldehyde-3-phosphate biosynthetic process"/>
    <property type="evidence" value="ECO:0007669"/>
    <property type="project" value="TreeGrafter"/>
</dbReference>
<dbReference type="GO" id="GO:0019563">
    <property type="term" value="P:glycerol catabolic process"/>
    <property type="evidence" value="ECO:0007669"/>
    <property type="project" value="TreeGrafter"/>
</dbReference>
<dbReference type="GO" id="GO:0006096">
    <property type="term" value="P:glycolytic process"/>
    <property type="evidence" value="ECO:0007669"/>
    <property type="project" value="UniProtKB-UniRule"/>
</dbReference>
<dbReference type="CDD" id="cd00311">
    <property type="entry name" value="TIM"/>
    <property type="match status" value="1"/>
</dbReference>
<dbReference type="FunFam" id="3.20.20.70:FF:000016">
    <property type="entry name" value="Triosephosphate isomerase"/>
    <property type="match status" value="1"/>
</dbReference>
<dbReference type="Gene3D" id="3.20.20.70">
    <property type="entry name" value="Aldolase class I"/>
    <property type="match status" value="1"/>
</dbReference>
<dbReference type="HAMAP" id="MF_00147_B">
    <property type="entry name" value="TIM_B"/>
    <property type="match status" value="1"/>
</dbReference>
<dbReference type="InterPro" id="IPR013785">
    <property type="entry name" value="Aldolase_TIM"/>
</dbReference>
<dbReference type="InterPro" id="IPR035990">
    <property type="entry name" value="TIM_sf"/>
</dbReference>
<dbReference type="InterPro" id="IPR022896">
    <property type="entry name" value="TrioseP_Isoase_bac/euk"/>
</dbReference>
<dbReference type="InterPro" id="IPR000652">
    <property type="entry name" value="Triosephosphate_isomerase"/>
</dbReference>
<dbReference type="InterPro" id="IPR020861">
    <property type="entry name" value="Triosephosphate_isomerase_AS"/>
</dbReference>
<dbReference type="NCBIfam" id="TIGR00419">
    <property type="entry name" value="tim"/>
    <property type="match status" value="1"/>
</dbReference>
<dbReference type="PANTHER" id="PTHR21139">
    <property type="entry name" value="TRIOSEPHOSPHATE ISOMERASE"/>
    <property type="match status" value="1"/>
</dbReference>
<dbReference type="PANTHER" id="PTHR21139:SF42">
    <property type="entry name" value="TRIOSEPHOSPHATE ISOMERASE"/>
    <property type="match status" value="1"/>
</dbReference>
<dbReference type="Pfam" id="PF00121">
    <property type="entry name" value="TIM"/>
    <property type="match status" value="1"/>
</dbReference>
<dbReference type="SUPFAM" id="SSF51351">
    <property type="entry name" value="Triosephosphate isomerase (TIM)"/>
    <property type="match status" value="1"/>
</dbReference>
<dbReference type="PROSITE" id="PS00171">
    <property type="entry name" value="TIM_1"/>
    <property type="match status" value="1"/>
</dbReference>
<dbReference type="PROSITE" id="PS51440">
    <property type="entry name" value="TIM_2"/>
    <property type="match status" value="1"/>
</dbReference>
<gene>
    <name evidence="1" type="primary">tpiA</name>
    <name type="ordered locus">BG0054</name>
</gene>
<comment type="function">
    <text evidence="1">Involved in the gluconeogenesis. Catalyzes stereospecifically the conversion of dihydroxyacetone phosphate (DHAP) to D-glyceraldehyde-3-phosphate (G3P).</text>
</comment>
<comment type="catalytic activity">
    <reaction evidence="1">
        <text>D-glyceraldehyde 3-phosphate = dihydroxyacetone phosphate</text>
        <dbReference type="Rhea" id="RHEA:18585"/>
        <dbReference type="ChEBI" id="CHEBI:57642"/>
        <dbReference type="ChEBI" id="CHEBI:59776"/>
        <dbReference type="EC" id="5.3.1.1"/>
    </reaction>
</comment>
<comment type="pathway">
    <text evidence="1">Carbohydrate biosynthesis; gluconeogenesis.</text>
</comment>
<comment type="pathway">
    <text evidence="1">Carbohydrate degradation; glycolysis; D-glyceraldehyde 3-phosphate from glycerone phosphate: step 1/1.</text>
</comment>
<comment type="subunit">
    <text evidence="1">Homodimer.</text>
</comment>
<comment type="subcellular location">
    <subcellularLocation>
        <location evidence="1">Cytoplasm</location>
    </subcellularLocation>
</comment>
<comment type="similarity">
    <text evidence="1">Belongs to the triosephosphate isomerase family.</text>
</comment>
<accession>Q662V9</accession>
<protein>
    <recommendedName>
        <fullName evidence="1">Triosephosphate isomerase</fullName>
        <shortName evidence="1">TIM</shortName>
        <shortName evidence="1">TPI</shortName>
        <ecNumber evidence="1">5.3.1.1</ecNumber>
    </recommendedName>
    <alternativeName>
        <fullName evidence="1">Triose-phosphate isomerase</fullName>
    </alternativeName>
</protein>
<reference key="1">
    <citation type="journal article" date="2004" name="Nucleic Acids Res.">
        <title>Comparative analysis of the Borrelia garinii genome.</title>
        <authorList>
            <person name="Gloeckner G."/>
            <person name="Lehmann R."/>
            <person name="Romualdi A."/>
            <person name="Pradella S."/>
            <person name="Schulte-Spechtel U."/>
            <person name="Schilhabel M."/>
            <person name="Wilske B."/>
            <person name="Suehnel J."/>
            <person name="Platzer M."/>
        </authorList>
    </citation>
    <scope>NUCLEOTIDE SEQUENCE [LARGE SCALE GENOMIC DNA]</scope>
    <source>
        <strain>ATCC BAA-2496 / DSM 23469 / PBi</strain>
    </source>
</reference>